<protein>
    <recommendedName>
        <fullName evidence="1">UDP-N-acetylmuramoylalanine--D-glutamate ligase</fullName>
        <ecNumber evidence="1">6.3.2.9</ecNumber>
    </recommendedName>
    <alternativeName>
        <fullName evidence="1">D-glutamic acid-adding enzyme</fullName>
    </alternativeName>
    <alternativeName>
        <fullName evidence="1">UDP-N-acetylmuramoyl-L-alanyl-D-glutamate synthetase</fullName>
    </alternativeName>
</protein>
<sequence length="450" mass="48901">MKTVTEFQNKNILVLGIAKSGYAAATLLQKLGANVIVNDGKPLAENVLAAELQAKGMDVVCGGHPLELLERNISLVVKNPGIPYSNPILVAAKEKQIPIVTEVELAYRISEAPFVGITGSNGKTTTTMLTFEMLKEGQKHPVIAGNIGTVACEVAQDAKENEVVVTELSSFQLMGVELFQPKIAAFLNLFEAHLDYHGTKKEYGLAKANIFKNQTENDYSVINADDADVMALSAYSKGQKVLFSTTKEIEDGACIKDNALYFKAEKVVEVDDIVLPGQHNLENILAAMSIAKLLGVSNEAITAVLKRFTGVKHRLEYVTTINNRKFYNDSKATNMLATEKALSAFTQPTVLLAGGLDRGNEFDDLIPYFKNVKAIVTFGQTAPKLVRAAEKAGLDTIESVDTLDEAVVKAYAHSTDGDVILLSPACASWDQFKTFEERGDIFIQAVHKLI</sequence>
<feature type="chain" id="PRO_1000147391" description="UDP-N-acetylmuramoylalanine--D-glutamate ligase">
    <location>
        <begin position="1"/>
        <end position="450"/>
    </location>
</feature>
<feature type="binding site" evidence="1">
    <location>
        <begin position="119"/>
        <end position="125"/>
    </location>
    <ligand>
        <name>ATP</name>
        <dbReference type="ChEBI" id="CHEBI:30616"/>
    </ligand>
</feature>
<gene>
    <name evidence="1" type="primary">murD</name>
    <name type="ordered locus">BAA_4077</name>
</gene>
<name>MURD_BACAA</name>
<reference key="1">
    <citation type="submission" date="2009-04" db="EMBL/GenBank/DDBJ databases">
        <title>Genome sequence of Bacillus anthracis A0248.</title>
        <authorList>
            <person name="Dodson R.J."/>
            <person name="Munk A.C."/>
            <person name="Bruce D."/>
            <person name="Detter C."/>
            <person name="Tapia R."/>
            <person name="Sutton G."/>
            <person name="Sims D."/>
            <person name="Brettin T."/>
        </authorList>
    </citation>
    <scope>NUCLEOTIDE SEQUENCE [LARGE SCALE GENOMIC DNA]</scope>
    <source>
        <strain>A0248</strain>
    </source>
</reference>
<evidence type="ECO:0000255" key="1">
    <source>
        <dbReference type="HAMAP-Rule" id="MF_00639"/>
    </source>
</evidence>
<organism>
    <name type="scientific">Bacillus anthracis (strain A0248)</name>
    <dbReference type="NCBI Taxonomy" id="592021"/>
    <lineage>
        <taxon>Bacteria</taxon>
        <taxon>Bacillati</taxon>
        <taxon>Bacillota</taxon>
        <taxon>Bacilli</taxon>
        <taxon>Bacillales</taxon>
        <taxon>Bacillaceae</taxon>
        <taxon>Bacillus</taxon>
        <taxon>Bacillus cereus group</taxon>
    </lineage>
</organism>
<keyword id="KW-0067">ATP-binding</keyword>
<keyword id="KW-0131">Cell cycle</keyword>
<keyword id="KW-0132">Cell division</keyword>
<keyword id="KW-0133">Cell shape</keyword>
<keyword id="KW-0961">Cell wall biogenesis/degradation</keyword>
<keyword id="KW-0963">Cytoplasm</keyword>
<keyword id="KW-0436">Ligase</keyword>
<keyword id="KW-0547">Nucleotide-binding</keyword>
<keyword id="KW-0573">Peptidoglycan synthesis</keyword>
<dbReference type="EC" id="6.3.2.9" evidence="1"/>
<dbReference type="EMBL" id="CP001598">
    <property type="protein sequence ID" value="ACQ50261.1"/>
    <property type="molecule type" value="Genomic_DNA"/>
</dbReference>
<dbReference type="RefSeq" id="WP_000860119.1">
    <property type="nucleotide sequence ID" value="NC_012659.1"/>
</dbReference>
<dbReference type="SMR" id="C3P682"/>
<dbReference type="GeneID" id="45023741"/>
<dbReference type="KEGG" id="bai:BAA_4077"/>
<dbReference type="HOGENOM" id="CLU_032540_0_1_9"/>
<dbReference type="UniPathway" id="UPA00219"/>
<dbReference type="GO" id="GO:0005737">
    <property type="term" value="C:cytoplasm"/>
    <property type="evidence" value="ECO:0007669"/>
    <property type="project" value="UniProtKB-SubCell"/>
</dbReference>
<dbReference type="GO" id="GO:0005524">
    <property type="term" value="F:ATP binding"/>
    <property type="evidence" value="ECO:0007669"/>
    <property type="project" value="UniProtKB-UniRule"/>
</dbReference>
<dbReference type="GO" id="GO:0008764">
    <property type="term" value="F:UDP-N-acetylmuramoylalanine-D-glutamate ligase activity"/>
    <property type="evidence" value="ECO:0007669"/>
    <property type="project" value="UniProtKB-UniRule"/>
</dbReference>
<dbReference type="GO" id="GO:0051301">
    <property type="term" value="P:cell division"/>
    <property type="evidence" value="ECO:0007669"/>
    <property type="project" value="UniProtKB-KW"/>
</dbReference>
<dbReference type="GO" id="GO:0071555">
    <property type="term" value="P:cell wall organization"/>
    <property type="evidence" value="ECO:0007669"/>
    <property type="project" value="UniProtKB-KW"/>
</dbReference>
<dbReference type="GO" id="GO:0009252">
    <property type="term" value="P:peptidoglycan biosynthetic process"/>
    <property type="evidence" value="ECO:0007669"/>
    <property type="project" value="UniProtKB-UniRule"/>
</dbReference>
<dbReference type="GO" id="GO:0008360">
    <property type="term" value="P:regulation of cell shape"/>
    <property type="evidence" value="ECO:0007669"/>
    <property type="project" value="UniProtKB-KW"/>
</dbReference>
<dbReference type="Gene3D" id="3.90.190.20">
    <property type="entry name" value="Mur ligase, C-terminal domain"/>
    <property type="match status" value="1"/>
</dbReference>
<dbReference type="Gene3D" id="3.40.1190.10">
    <property type="entry name" value="Mur-like, catalytic domain"/>
    <property type="match status" value="1"/>
</dbReference>
<dbReference type="Gene3D" id="3.40.50.720">
    <property type="entry name" value="NAD(P)-binding Rossmann-like Domain"/>
    <property type="match status" value="1"/>
</dbReference>
<dbReference type="HAMAP" id="MF_00639">
    <property type="entry name" value="MurD"/>
    <property type="match status" value="1"/>
</dbReference>
<dbReference type="InterPro" id="IPR036565">
    <property type="entry name" value="Mur-like_cat_sf"/>
</dbReference>
<dbReference type="InterPro" id="IPR004101">
    <property type="entry name" value="Mur_ligase_C"/>
</dbReference>
<dbReference type="InterPro" id="IPR036615">
    <property type="entry name" value="Mur_ligase_C_dom_sf"/>
</dbReference>
<dbReference type="InterPro" id="IPR013221">
    <property type="entry name" value="Mur_ligase_cen"/>
</dbReference>
<dbReference type="InterPro" id="IPR005762">
    <property type="entry name" value="MurD"/>
</dbReference>
<dbReference type="NCBIfam" id="TIGR01087">
    <property type="entry name" value="murD"/>
    <property type="match status" value="1"/>
</dbReference>
<dbReference type="PANTHER" id="PTHR43692">
    <property type="entry name" value="UDP-N-ACETYLMURAMOYLALANINE--D-GLUTAMATE LIGASE"/>
    <property type="match status" value="1"/>
</dbReference>
<dbReference type="PANTHER" id="PTHR43692:SF1">
    <property type="entry name" value="UDP-N-ACETYLMURAMOYLALANINE--D-GLUTAMATE LIGASE"/>
    <property type="match status" value="1"/>
</dbReference>
<dbReference type="Pfam" id="PF02875">
    <property type="entry name" value="Mur_ligase_C"/>
    <property type="match status" value="1"/>
</dbReference>
<dbReference type="Pfam" id="PF08245">
    <property type="entry name" value="Mur_ligase_M"/>
    <property type="match status" value="1"/>
</dbReference>
<dbReference type="Pfam" id="PF21799">
    <property type="entry name" value="MurD-like_N"/>
    <property type="match status" value="1"/>
</dbReference>
<dbReference type="SUPFAM" id="SSF51984">
    <property type="entry name" value="MurCD N-terminal domain"/>
    <property type="match status" value="1"/>
</dbReference>
<dbReference type="SUPFAM" id="SSF53623">
    <property type="entry name" value="MurD-like peptide ligases, catalytic domain"/>
    <property type="match status" value="1"/>
</dbReference>
<dbReference type="SUPFAM" id="SSF53244">
    <property type="entry name" value="MurD-like peptide ligases, peptide-binding domain"/>
    <property type="match status" value="1"/>
</dbReference>
<accession>C3P682</accession>
<comment type="function">
    <text evidence="1">Cell wall formation. Catalyzes the addition of glutamate to the nucleotide precursor UDP-N-acetylmuramoyl-L-alanine (UMA).</text>
</comment>
<comment type="catalytic activity">
    <reaction evidence="1">
        <text>UDP-N-acetyl-alpha-D-muramoyl-L-alanine + D-glutamate + ATP = UDP-N-acetyl-alpha-D-muramoyl-L-alanyl-D-glutamate + ADP + phosphate + H(+)</text>
        <dbReference type="Rhea" id="RHEA:16429"/>
        <dbReference type="ChEBI" id="CHEBI:15378"/>
        <dbReference type="ChEBI" id="CHEBI:29986"/>
        <dbReference type="ChEBI" id="CHEBI:30616"/>
        <dbReference type="ChEBI" id="CHEBI:43474"/>
        <dbReference type="ChEBI" id="CHEBI:83898"/>
        <dbReference type="ChEBI" id="CHEBI:83900"/>
        <dbReference type="ChEBI" id="CHEBI:456216"/>
        <dbReference type="EC" id="6.3.2.9"/>
    </reaction>
</comment>
<comment type="pathway">
    <text evidence="1">Cell wall biogenesis; peptidoglycan biosynthesis.</text>
</comment>
<comment type="subcellular location">
    <subcellularLocation>
        <location evidence="1">Cytoplasm</location>
    </subcellularLocation>
</comment>
<comment type="similarity">
    <text evidence="1">Belongs to the MurCDEF family.</text>
</comment>
<proteinExistence type="inferred from homology"/>